<gene>
    <name evidence="1" type="primary">metN</name>
    <name type="ordered locus">UTI89_C0215</name>
</gene>
<evidence type="ECO:0000255" key="1">
    <source>
        <dbReference type="HAMAP-Rule" id="MF_01719"/>
    </source>
</evidence>
<keyword id="KW-0029">Amino-acid transport</keyword>
<keyword id="KW-0067">ATP-binding</keyword>
<keyword id="KW-0997">Cell inner membrane</keyword>
<keyword id="KW-1003">Cell membrane</keyword>
<keyword id="KW-0472">Membrane</keyword>
<keyword id="KW-0547">Nucleotide-binding</keyword>
<keyword id="KW-1278">Translocase</keyword>
<keyword id="KW-0813">Transport</keyword>
<reference key="1">
    <citation type="journal article" date="2006" name="Proc. Natl. Acad. Sci. U.S.A.">
        <title>Identification of genes subject to positive selection in uropathogenic strains of Escherichia coli: a comparative genomics approach.</title>
        <authorList>
            <person name="Chen S.L."/>
            <person name="Hung C.-S."/>
            <person name="Xu J."/>
            <person name="Reigstad C.S."/>
            <person name="Magrini V."/>
            <person name="Sabo A."/>
            <person name="Blasiar D."/>
            <person name="Bieri T."/>
            <person name="Meyer R.R."/>
            <person name="Ozersky P."/>
            <person name="Armstrong J.R."/>
            <person name="Fulton R.S."/>
            <person name="Latreille J.P."/>
            <person name="Spieth J."/>
            <person name="Hooton T.M."/>
            <person name="Mardis E.R."/>
            <person name="Hultgren S.J."/>
            <person name="Gordon J.I."/>
        </authorList>
    </citation>
    <scope>NUCLEOTIDE SEQUENCE [LARGE SCALE GENOMIC DNA]</scope>
    <source>
        <strain>UTI89 / UPEC</strain>
    </source>
</reference>
<proteinExistence type="inferred from homology"/>
<accession>Q1RFY9</accession>
<organism>
    <name type="scientific">Escherichia coli (strain UTI89 / UPEC)</name>
    <dbReference type="NCBI Taxonomy" id="364106"/>
    <lineage>
        <taxon>Bacteria</taxon>
        <taxon>Pseudomonadati</taxon>
        <taxon>Pseudomonadota</taxon>
        <taxon>Gammaproteobacteria</taxon>
        <taxon>Enterobacterales</taxon>
        <taxon>Enterobacteriaceae</taxon>
        <taxon>Escherichia</taxon>
    </lineage>
</organism>
<protein>
    <recommendedName>
        <fullName evidence="1">Methionine import ATP-binding protein MetN</fullName>
        <ecNumber evidence="1">7.4.2.11</ecNumber>
    </recommendedName>
</protein>
<dbReference type="EC" id="7.4.2.11" evidence="1"/>
<dbReference type="EMBL" id="CP000243">
    <property type="protein sequence ID" value="ABE05725.1"/>
    <property type="molecule type" value="Genomic_DNA"/>
</dbReference>
<dbReference type="RefSeq" id="WP_000593994.1">
    <property type="nucleotide sequence ID" value="NZ_CP064825.1"/>
</dbReference>
<dbReference type="SMR" id="Q1RFY9"/>
<dbReference type="GeneID" id="93777224"/>
<dbReference type="KEGG" id="eci:UTI89_C0215"/>
<dbReference type="HOGENOM" id="CLU_000604_1_3_6"/>
<dbReference type="Proteomes" id="UP000001952">
    <property type="component" value="Chromosome"/>
</dbReference>
<dbReference type="GO" id="GO:0009276">
    <property type="term" value="C:Gram-negative-bacterium-type cell wall"/>
    <property type="evidence" value="ECO:0007669"/>
    <property type="project" value="InterPro"/>
</dbReference>
<dbReference type="GO" id="GO:0005886">
    <property type="term" value="C:plasma membrane"/>
    <property type="evidence" value="ECO:0007669"/>
    <property type="project" value="UniProtKB-SubCell"/>
</dbReference>
<dbReference type="GO" id="GO:0033232">
    <property type="term" value="F:ABC-type D-methionine transporter activity"/>
    <property type="evidence" value="ECO:0007669"/>
    <property type="project" value="UniProtKB-EC"/>
</dbReference>
<dbReference type="GO" id="GO:0005524">
    <property type="term" value="F:ATP binding"/>
    <property type="evidence" value="ECO:0007669"/>
    <property type="project" value="UniProtKB-KW"/>
</dbReference>
<dbReference type="GO" id="GO:0016887">
    <property type="term" value="F:ATP hydrolysis activity"/>
    <property type="evidence" value="ECO:0007669"/>
    <property type="project" value="InterPro"/>
</dbReference>
<dbReference type="CDD" id="cd03258">
    <property type="entry name" value="ABC_MetN_methionine_transporter"/>
    <property type="match status" value="1"/>
</dbReference>
<dbReference type="FunFam" id="3.30.70.260:FF:000014">
    <property type="entry name" value="Methionine import ATP-binding protein MetN"/>
    <property type="match status" value="1"/>
</dbReference>
<dbReference type="FunFam" id="3.40.50.300:FF:000233">
    <property type="entry name" value="Methionine import ATP-binding protein MetN"/>
    <property type="match status" value="1"/>
</dbReference>
<dbReference type="Gene3D" id="3.30.70.260">
    <property type="match status" value="1"/>
</dbReference>
<dbReference type="Gene3D" id="3.40.50.300">
    <property type="entry name" value="P-loop containing nucleotide triphosphate hydrolases"/>
    <property type="match status" value="1"/>
</dbReference>
<dbReference type="InterPro" id="IPR003593">
    <property type="entry name" value="AAA+_ATPase"/>
</dbReference>
<dbReference type="InterPro" id="IPR012692">
    <property type="entry name" value="ABC_MetN_proteobac"/>
</dbReference>
<dbReference type="InterPro" id="IPR003439">
    <property type="entry name" value="ABC_transporter-like_ATP-bd"/>
</dbReference>
<dbReference type="InterPro" id="IPR017871">
    <property type="entry name" value="ABC_transporter-like_CS"/>
</dbReference>
<dbReference type="InterPro" id="IPR045865">
    <property type="entry name" value="ACT-like_dom_sf"/>
</dbReference>
<dbReference type="InterPro" id="IPR041701">
    <property type="entry name" value="MetN_ABC"/>
</dbReference>
<dbReference type="InterPro" id="IPR050086">
    <property type="entry name" value="MetN_ABC_transporter-like"/>
</dbReference>
<dbReference type="InterPro" id="IPR018449">
    <property type="entry name" value="NIL_domain"/>
</dbReference>
<dbReference type="InterPro" id="IPR027417">
    <property type="entry name" value="P-loop_NTPase"/>
</dbReference>
<dbReference type="NCBIfam" id="TIGR02314">
    <property type="entry name" value="ABC_MetN"/>
    <property type="match status" value="1"/>
</dbReference>
<dbReference type="PANTHER" id="PTHR43166">
    <property type="entry name" value="AMINO ACID IMPORT ATP-BINDING PROTEIN"/>
    <property type="match status" value="1"/>
</dbReference>
<dbReference type="PANTHER" id="PTHR43166:SF30">
    <property type="entry name" value="METHIONINE IMPORT ATP-BINDING PROTEIN METN"/>
    <property type="match status" value="1"/>
</dbReference>
<dbReference type="Pfam" id="PF00005">
    <property type="entry name" value="ABC_tran"/>
    <property type="match status" value="1"/>
</dbReference>
<dbReference type="Pfam" id="PF09383">
    <property type="entry name" value="NIL"/>
    <property type="match status" value="1"/>
</dbReference>
<dbReference type="SMART" id="SM00382">
    <property type="entry name" value="AAA"/>
    <property type="match status" value="1"/>
</dbReference>
<dbReference type="SMART" id="SM00930">
    <property type="entry name" value="NIL"/>
    <property type="match status" value="1"/>
</dbReference>
<dbReference type="SUPFAM" id="SSF55021">
    <property type="entry name" value="ACT-like"/>
    <property type="match status" value="1"/>
</dbReference>
<dbReference type="SUPFAM" id="SSF52540">
    <property type="entry name" value="P-loop containing nucleoside triphosphate hydrolases"/>
    <property type="match status" value="1"/>
</dbReference>
<dbReference type="PROSITE" id="PS00211">
    <property type="entry name" value="ABC_TRANSPORTER_1"/>
    <property type="match status" value="1"/>
</dbReference>
<dbReference type="PROSITE" id="PS50893">
    <property type="entry name" value="ABC_TRANSPORTER_2"/>
    <property type="match status" value="1"/>
</dbReference>
<dbReference type="PROSITE" id="PS51264">
    <property type="entry name" value="METN"/>
    <property type="match status" value="1"/>
</dbReference>
<name>METN_ECOUT</name>
<comment type="function">
    <text evidence="1">Part of the ABC transporter complex MetNIQ involved in methionine import. Responsible for energy coupling to the transport system.</text>
</comment>
<comment type="catalytic activity">
    <reaction evidence="1">
        <text>L-methionine(out) + ATP + H2O = L-methionine(in) + ADP + phosphate + H(+)</text>
        <dbReference type="Rhea" id="RHEA:29779"/>
        <dbReference type="ChEBI" id="CHEBI:15377"/>
        <dbReference type="ChEBI" id="CHEBI:15378"/>
        <dbReference type="ChEBI" id="CHEBI:30616"/>
        <dbReference type="ChEBI" id="CHEBI:43474"/>
        <dbReference type="ChEBI" id="CHEBI:57844"/>
        <dbReference type="ChEBI" id="CHEBI:456216"/>
        <dbReference type="EC" id="7.4.2.11"/>
    </reaction>
</comment>
<comment type="catalytic activity">
    <reaction evidence="1">
        <text>D-methionine(out) + ATP + H2O = D-methionine(in) + ADP + phosphate + H(+)</text>
        <dbReference type="Rhea" id="RHEA:29767"/>
        <dbReference type="ChEBI" id="CHEBI:15377"/>
        <dbReference type="ChEBI" id="CHEBI:15378"/>
        <dbReference type="ChEBI" id="CHEBI:30616"/>
        <dbReference type="ChEBI" id="CHEBI:43474"/>
        <dbReference type="ChEBI" id="CHEBI:57932"/>
        <dbReference type="ChEBI" id="CHEBI:456216"/>
        <dbReference type="EC" id="7.4.2.11"/>
    </reaction>
</comment>
<comment type="subunit">
    <text evidence="1">The complex is composed of two ATP-binding proteins (MetN), two transmembrane proteins (MetI) and a solute-binding protein (MetQ).</text>
</comment>
<comment type="subcellular location">
    <subcellularLocation>
        <location evidence="1">Cell inner membrane</location>
        <topology evidence="1">Peripheral membrane protein</topology>
    </subcellularLocation>
</comment>
<comment type="similarity">
    <text evidence="1">Belongs to the ABC transporter superfamily. Methionine importer (TC 3.A.1.24) family.</text>
</comment>
<sequence>MIKLSNITKVFHQGTRTIQALNNVSLHVPAGQIYGVIGASGAGKSTLIRCVNLLERPTEGSVLVDGQELTTLSESELTKARRQIGMIFQHFNLLSSRTVFGNVALPLELDNTPKDEIKRRVTELLSLVGLGDKHDSYPSNLSGGQKQRVAIARALASNPKVLLCDEATSALDPATTRSILELLKDINRRLGLTILLITHEMDVVKRICDCVAVISNGELIEQDTVSEVFSHPKTPLAQKFIQSTLHLDIPEDYQERLQAEPFTDCVPMLRLEFTGQSVDAPLLSETARRFNVNNNIISAQMDYAGGVKFGIMLTEMHGTQQDTQAAIAWLQEHHVKVEVLGYV</sequence>
<feature type="chain" id="PRO_0000270298" description="Methionine import ATP-binding protein MetN">
    <location>
        <begin position="1"/>
        <end position="343"/>
    </location>
</feature>
<feature type="domain" description="ABC transporter" evidence="1">
    <location>
        <begin position="2"/>
        <end position="241"/>
    </location>
</feature>
<feature type="binding site" evidence="1">
    <location>
        <begin position="38"/>
        <end position="45"/>
    </location>
    <ligand>
        <name>ATP</name>
        <dbReference type="ChEBI" id="CHEBI:30616"/>
    </ligand>
</feature>